<feature type="chain" id="PRO_1000080798" description="Transcriptional repressor NrdR">
    <location>
        <begin position="1"/>
        <end position="158"/>
    </location>
</feature>
<feature type="domain" description="ATP-cone" evidence="1">
    <location>
        <begin position="49"/>
        <end position="139"/>
    </location>
</feature>
<feature type="zinc finger region" evidence="1">
    <location>
        <begin position="3"/>
        <end position="34"/>
    </location>
</feature>
<comment type="function">
    <text evidence="1">Negatively regulates transcription of bacterial ribonucleotide reductase nrd genes and operons by binding to NrdR-boxes.</text>
</comment>
<comment type="cofactor">
    <cofactor evidence="1">
        <name>Zn(2+)</name>
        <dbReference type="ChEBI" id="CHEBI:29105"/>
    </cofactor>
    <text evidence="1">Binds 1 zinc ion.</text>
</comment>
<comment type="similarity">
    <text evidence="1">Belongs to the NrdR family.</text>
</comment>
<protein>
    <recommendedName>
        <fullName evidence="1">Transcriptional repressor NrdR</fullName>
    </recommendedName>
</protein>
<sequence>MQCPSCQNTDSRVLESRAADAGRSVRRRRECLHCDFRFTTYERVETVPITVLKRNGNRETFNRSKILNGLTMACQKTGLEQDRLESMVNELELQLQQRSGREVNSAEIGEMVLDQLSEMSEVAYVRFASVYRHFRGINDFVAALEGIHANKEQLAAVR</sequence>
<accession>A2CBU0</accession>
<proteinExistence type="inferred from homology"/>
<dbReference type="EMBL" id="CP000554">
    <property type="protein sequence ID" value="ABM78950.1"/>
    <property type="molecule type" value="Genomic_DNA"/>
</dbReference>
<dbReference type="RefSeq" id="WP_011826818.1">
    <property type="nucleotide sequence ID" value="NC_008820.1"/>
</dbReference>
<dbReference type="SMR" id="A2CBU0"/>
<dbReference type="STRING" id="59922.P9303_22151"/>
<dbReference type="KEGG" id="pmf:P9303_22151"/>
<dbReference type="HOGENOM" id="CLU_108412_0_0_3"/>
<dbReference type="BioCyc" id="PMAR59922:G1G80-1938-MONOMER"/>
<dbReference type="Proteomes" id="UP000002274">
    <property type="component" value="Chromosome"/>
</dbReference>
<dbReference type="GO" id="GO:0005524">
    <property type="term" value="F:ATP binding"/>
    <property type="evidence" value="ECO:0007669"/>
    <property type="project" value="UniProtKB-KW"/>
</dbReference>
<dbReference type="GO" id="GO:0003677">
    <property type="term" value="F:DNA binding"/>
    <property type="evidence" value="ECO:0007669"/>
    <property type="project" value="UniProtKB-KW"/>
</dbReference>
<dbReference type="GO" id="GO:0008270">
    <property type="term" value="F:zinc ion binding"/>
    <property type="evidence" value="ECO:0007669"/>
    <property type="project" value="UniProtKB-UniRule"/>
</dbReference>
<dbReference type="GO" id="GO:0045892">
    <property type="term" value="P:negative regulation of DNA-templated transcription"/>
    <property type="evidence" value="ECO:0007669"/>
    <property type="project" value="UniProtKB-UniRule"/>
</dbReference>
<dbReference type="HAMAP" id="MF_00440">
    <property type="entry name" value="NrdR"/>
    <property type="match status" value="1"/>
</dbReference>
<dbReference type="InterPro" id="IPR005144">
    <property type="entry name" value="ATP-cone_dom"/>
</dbReference>
<dbReference type="InterPro" id="IPR055173">
    <property type="entry name" value="NrdR-like_N"/>
</dbReference>
<dbReference type="InterPro" id="IPR003796">
    <property type="entry name" value="RNR_NrdR-like"/>
</dbReference>
<dbReference type="NCBIfam" id="TIGR00244">
    <property type="entry name" value="transcriptional regulator NrdR"/>
    <property type="match status" value="1"/>
</dbReference>
<dbReference type="PANTHER" id="PTHR30455">
    <property type="entry name" value="TRANSCRIPTIONAL REPRESSOR NRDR"/>
    <property type="match status" value="1"/>
</dbReference>
<dbReference type="PANTHER" id="PTHR30455:SF2">
    <property type="entry name" value="TRANSCRIPTIONAL REPRESSOR NRDR"/>
    <property type="match status" value="1"/>
</dbReference>
<dbReference type="Pfam" id="PF03477">
    <property type="entry name" value="ATP-cone"/>
    <property type="match status" value="1"/>
</dbReference>
<dbReference type="Pfam" id="PF22811">
    <property type="entry name" value="Zn_ribbon_NrdR"/>
    <property type="match status" value="1"/>
</dbReference>
<dbReference type="PROSITE" id="PS51161">
    <property type="entry name" value="ATP_CONE"/>
    <property type="match status" value="1"/>
</dbReference>
<name>NRDR_PROM3</name>
<reference key="1">
    <citation type="journal article" date="2007" name="PLoS Genet.">
        <title>Patterns and implications of gene gain and loss in the evolution of Prochlorococcus.</title>
        <authorList>
            <person name="Kettler G.C."/>
            <person name="Martiny A.C."/>
            <person name="Huang K."/>
            <person name="Zucker J."/>
            <person name="Coleman M.L."/>
            <person name="Rodrigue S."/>
            <person name="Chen F."/>
            <person name="Lapidus A."/>
            <person name="Ferriera S."/>
            <person name="Johnson J."/>
            <person name="Steglich C."/>
            <person name="Church G.M."/>
            <person name="Richardson P."/>
            <person name="Chisholm S.W."/>
        </authorList>
    </citation>
    <scope>NUCLEOTIDE SEQUENCE [LARGE SCALE GENOMIC DNA]</scope>
    <source>
        <strain>MIT 9303</strain>
    </source>
</reference>
<keyword id="KW-0067">ATP-binding</keyword>
<keyword id="KW-0238">DNA-binding</keyword>
<keyword id="KW-0479">Metal-binding</keyword>
<keyword id="KW-0547">Nucleotide-binding</keyword>
<keyword id="KW-0678">Repressor</keyword>
<keyword id="KW-0804">Transcription</keyword>
<keyword id="KW-0805">Transcription regulation</keyword>
<keyword id="KW-0862">Zinc</keyword>
<keyword id="KW-0863">Zinc-finger</keyword>
<evidence type="ECO:0000255" key="1">
    <source>
        <dbReference type="HAMAP-Rule" id="MF_00440"/>
    </source>
</evidence>
<gene>
    <name evidence="1" type="primary">nrdR</name>
    <name type="ordered locus">P9303_22151</name>
</gene>
<organism>
    <name type="scientific">Prochlorococcus marinus (strain MIT 9303)</name>
    <dbReference type="NCBI Taxonomy" id="59922"/>
    <lineage>
        <taxon>Bacteria</taxon>
        <taxon>Bacillati</taxon>
        <taxon>Cyanobacteriota</taxon>
        <taxon>Cyanophyceae</taxon>
        <taxon>Synechococcales</taxon>
        <taxon>Prochlorococcaceae</taxon>
        <taxon>Prochlorococcus</taxon>
    </lineage>
</organism>